<name>SEL1_SCHPO</name>
<keyword id="KW-0963">Cytoplasm</keyword>
<keyword id="KW-1185">Reference proteome</keyword>
<dbReference type="EMBL" id="CU329670">
    <property type="protein sequence ID" value="CAB16357.1"/>
    <property type="molecule type" value="Genomic_DNA"/>
</dbReference>
<dbReference type="EMBL" id="AB027774">
    <property type="protein sequence ID" value="BAA87078.1"/>
    <property type="molecule type" value="Genomic_DNA"/>
</dbReference>
<dbReference type="PIR" id="T38010">
    <property type="entry name" value="T38010"/>
</dbReference>
<dbReference type="RefSeq" id="NP_593199.1">
    <property type="nucleotide sequence ID" value="NM_001018595.2"/>
</dbReference>
<dbReference type="BioGRID" id="278944">
    <property type="interactions" value="15"/>
</dbReference>
<dbReference type="STRING" id="284812.O13858"/>
<dbReference type="iPTMnet" id="O13858"/>
<dbReference type="PaxDb" id="4896-SPAC1A6.07.1"/>
<dbReference type="EnsemblFungi" id="SPAC1A6.07.1">
    <property type="protein sequence ID" value="SPAC1A6.07.1:pep"/>
    <property type="gene ID" value="SPAC1A6.07"/>
</dbReference>
<dbReference type="GeneID" id="2542484"/>
<dbReference type="KEGG" id="spo:2542484"/>
<dbReference type="PomBase" id="SPAC1A6.07">
    <property type="gene designation" value="sle1"/>
</dbReference>
<dbReference type="VEuPathDB" id="FungiDB:SPAC1A6.07"/>
<dbReference type="eggNOG" id="KOG1181">
    <property type="taxonomic scope" value="Eukaryota"/>
</dbReference>
<dbReference type="HOGENOM" id="CLU_513042_0_0_1"/>
<dbReference type="InParanoid" id="O13858"/>
<dbReference type="OMA" id="NSESTQY"/>
<dbReference type="PRO" id="PR:O13858"/>
<dbReference type="Proteomes" id="UP000002485">
    <property type="component" value="Chromosome I"/>
</dbReference>
<dbReference type="GO" id="GO:0051285">
    <property type="term" value="C:cell cortex of cell tip"/>
    <property type="evidence" value="ECO:0000314"/>
    <property type="project" value="PomBase"/>
</dbReference>
<dbReference type="GO" id="GO:0036286">
    <property type="term" value="C:eisosome filament"/>
    <property type="evidence" value="ECO:0000314"/>
    <property type="project" value="PomBase"/>
</dbReference>
<dbReference type="GO" id="GO:0007009">
    <property type="term" value="P:plasma membrane organization"/>
    <property type="evidence" value="ECO:0000305"/>
    <property type="project" value="PomBase"/>
</dbReference>
<proteinExistence type="evidence at protein level"/>
<reference key="1">
    <citation type="journal article" date="2002" name="Nature">
        <title>The genome sequence of Schizosaccharomyces pombe.</title>
        <authorList>
            <person name="Wood V."/>
            <person name="Gwilliam R."/>
            <person name="Rajandream M.A."/>
            <person name="Lyne M.H."/>
            <person name="Lyne R."/>
            <person name="Stewart A."/>
            <person name="Sgouros J.G."/>
            <person name="Peat N."/>
            <person name="Hayles J."/>
            <person name="Baker S.G."/>
            <person name="Basham D."/>
            <person name="Bowman S."/>
            <person name="Brooks K."/>
            <person name="Brown D."/>
            <person name="Brown S."/>
            <person name="Chillingworth T."/>
            <person name="Churcher C.M."/>
            <person name="Collins M."/>
            <person name="Connor R."/>
            <person name="Cronin A."/>
            <person name="Davis P."/>
            <person name="Feltwell T."/>
            <person name="Fraser A."/>
            <person name="Gentles S."/>
            <person name="Goble A."/>
            <person name="Hamlin N."/>
            <person name="Harris D.E."/>
            <person name="Hidalgo J."/>
            <person name="Hodgson G."/>
            <person name="Holroyd S."/>
            <person name="Hornsby T."/>
            <person name="Howarth S."/>
            <person name="Huckle E.J."/>
            <person name="Hunt S."/>
            <person name="Jagels K."/>
            <person name="James K.D."/>
            <person name="Jones L."/>
            <person name="Jones M."/>
            <person name="Leather S."/>
            <person name="McDonald S."/>
            <person name="McLean J."/>
            <person name="Mooney P."/>
            <person name="Moule S."/>
            <person name="Mungall K.L."/>
            <person name="Murphy L.D."/>
            <person name="Niblett D."/>
            <person name="Odell C."/>
            <person name="Oliver K."/>
            <person name="O'Neil S."/>
            <person name="Pearson D."/>
            <person name="Quail M.A."/>
            <person name="Rabbinowitsch E."/>
            <person name="Rutherford K.M."/>
            <person name="Rutter S."/>
            <person name="Saunders D."/>
            <person name="Seeger K."/>
            <person name="Sharp S."/>
            <person name="Skelton J."/>
            <person name="Simmonds M.N."/>
            <person name="Squares R."/>
            <person name="Squares S."/>
            <person name="Stevens K."/>
            <person name="Taylor K."/>
            <person name="Taylor R.G."/>
            <person name="Tivey A."/>
            <person name="Walsh S.V."/>
            <person name="Warren T."/>
            <person name="Whitehead S."/>
            <person name="Woodward J.R."/>
            <person name="Volckaert G."/>
            <person name="Aert R."/>
            <person name="Robben J."/>
            <person name="Grymonprez B."/>
            <person name="Weltjens I."/>
            <person name="Vanstreels E."/>
            <person name="Rieger M."/>
            <person name="Schaefer M."/>
            <person name="Mueller-Auer S."/>
            <person name="Gabel C."/>
            <person name="Fuchs M."/>
            <person name="Duesterhoeft A."/>
            <person name="Fritzc C."/>
            <person name="Holzer E."/>
            <person name="Moestl D."/>
            <person name="Hilbert H."/>
            <person name="Borzym K."/>
            <person name="Langer I."/>
            <person name="Beck A."/>
            <person name="Lehrach H."/>
            <person name="Reinhardt R."/>
            <person name="Pohl T.M."/>
            <person name="Eger P."/>
            <person name="Zimmermann W."/>
            <person name="Wedler H."/>
            <person name="Wambutt R."/>
            <person name="Purnelle B."/>
            <person name="Goffeau A."/>
            <person name="Cadieu E."/>
            <person name="Dreano S."/>
            <person name="Gloux S."/>
            <person name="Lelaure V."/>
            <person name="Mottier S."/>
            <person name="Galibert F."/>
            <person name="Aves S.J."/>
            <person name="Xiang Z."/>
            <person name="Hunt C."/>
            <person name="Moore K."/>
            <person name="Hurst S.M."/>
            <person name="Lucas M."/>
            <person name="Rochet M."/>
            <person name="Gaillardin C."/>
            <person name="Tallada V.A."/>
            <person name="Garzon A."/>
            <person name="Thode G."/>
            <person name="Daga R.R."/>
            <person name="Cruzado L."/>
            <person name="Jimenez J."/>
            <person name="Sanchez M."/>
            <person name="del Rey F."/>
            <person name="Benito J."/>
            <person name="Dominguez A."/>
            <person name="Revuelta J.L."/>
            <person name="Moreno S."/>
            <person name="Armstrong J."/>
            <person name="Forsburg S.L."/>
            <person name="Cerutti L."/>
            <person name="Lowe T."/>
            <person name="McCombie W.R."/>
            <person name="Paulsen I."/>
            <person name="Potashkin J."/>
            <person name="Shpakovski G.V."/>
            <person name="Ussery D."/>
            <person name="Barrell B.G."/>
            <person name="Nurse P."/>
        </authorList>
    </citation>
    <scope>NUCLEOTIDE SEQUENCE [LARGE SCALE GENOMIC DNA]</scope>
    <source>
        <strain>972 / ATCC 24843</strain>
    </source>
</reference>
<reference key="2">
    <citation type="journal article" date="2000" name="Genes Cells">
        <title>Large-scale screening of intracellular protein localization in living fission yeast cells by the use of a GFP-fusion genomic DNA library.</title>
        <authorList>
            <person name="Ding D.-Q."/>
            <person name="Tomita Y."/>
            <person name="Yamamoto A."/>
            <person name="Chikashige Y."/>
            <person name="Haraguchi T."/>
            <person name="Hiraoka Y."/>
        </authorList>
    </citation>
    <scope>NUCLEOTIDE SEQUENCE [LARGE SCALE GENOMIC DNA] OF 109-298</scope>
    <scope>SUBCELLULAR LOCATION</scope>
    <source>
        <strain>ATCC 38364 / 968</strain>
    </source>
</reference>
<reference key="3">
    <citation type="journal article" date="2012" name="J. Cell Biol.">
        <title>Seg1 controls eisosome assembly and shape.</title>
        <authorList>
            <person name="Moreira K.E."/>
            <person name="Schuck S."/>
            <person name="Schrul B."/>
            <person name="Frohlich F."/>
            <person name="Moseley J.B."/>
            <person name="Walther T.C."/>
            <person name="Walter P."/>
        </authorList>
    </citation>
    <scope>FUNCTION</scope>
    <scope>SUBCELLULAR LOCATION</scope>
    <scope>SUBUNIT</scope>
</reference>
<sequence length="636" mass="69794">MSHASKNYNAQLTAAAASTALHGTKKIYNSNENDRAVNSFLGNRTSYGEAVNGSPQYDYMRSRMSTLGSANQPMAPPSLRNRSSVYLPTPAGPPQIPVNTGKRYTLTSSSANYMTKSERQMRPPKSYDFPPSQQVRPSTSRSPSYASYNSEEVNFQSYQDPRLLPRTSQMYMPDNNYSPAVKSPAAQRRSSSYMVPANSRGSPANYNTPYYPTAIPPPIEEYSPSVSLPTSPVAEESYNNVQRSSTVRNNTTQKSVLKKPSRKMSPAYTSSYRQNSPSSQVPPVSKKHVIIYENKEGSSSSESVYEDVFEDFDPSGSNQASLRSTSTIHYTPSSKRISVIPPNTSNIGSRVVSRSGQNNNQPAQPGQYNQQSQPVQSYQSGQSTQHFQPVQPIQPVQSTQYYQPSSPVQPVQNGVPAPPMQPVQSTQYYQPSSPVQPVQNVKPAQPAQPSLEDAAKRRVEEMLRQMDITPTASSTTANNAYASAEPHPSAFPDDMNSVFSDSSFERERDSGRGRSTNLFSKFKSGRSRSKASGEAPYSYPAPPVPSVNNAGARLTLRDSGAAPEATYSLRQPSNHAYSEGRSYTFTGGQPPSVPTMPYGSRFANDSDSMMGSTADFSSKKKGGKFKAFKKFFKMRF</sequence>
<gene>
    <name type="primary">sle1</name>
    <name type="synonym">seg1</name>
    <name type="ORF">SPAC1A6.07</name>
</gene>
<accession>O13858</accession>
<accession>Q9UU73</accession>
<feature type="chain" id="PRO_0000304029" description="Eisosome protein sle1">
    <location>
        <begin position="1"/>
        <end position="636"/>
    </location>
</feature>
<feature type="region of interest" description="Required for targeting the protein to eisosomes">
    <location>
        <begin position="1"/>
        <end position="297"/>
    </location>
</feature>
<feature type="region of interest" description="Disordered" evidence="1">
    <location>
        <begin position="111"/>
        <end position="205"/>
    </location>
</feature>
<feature type="region of interest" description="Disordered" evidence="1">
    <location>
        <begin position="222"/>
        <end position="284"/>
    </location>
</feature>
<feature type="region of interest" description="Disordered" evidence="1">
    <location>
        <begin position="313"/>
        <end position="387"/>
    </location>
</feature>
<feature type="region of interest" description="Disordered" evidence="1">
    <location>
        <begin position="400"/>
        <end position="451"/>
    </location>
</feature>
<feature type="region of interest" description="Disordered" evidence="1">
    <location>
        <begin position="467"/>
        <end position="550"/>
    </location>
</feature>
<feature type="region of interest" description="Disordered" evidence="1">
    <location>
        <begin position="572"/>
        <end position="604"/>
    </location>
</feature>
<feature type="compositionally biased region" description="Polar residues" evidence="1">
    <location>
        <begin position="131"/>
        <end position="159"/>
    </location>
</feature>
<feature type="compositionally biased region" description="Polar residues" evidence="1">
    <location>
        <begin position="166"/>
        <end position="178"/>
    </location>
</feature>
<feature type="compositionally biased region" description="Polar residues" evidence="1">
    <location>
        <begin position="188"/>
        <end position="204"/>
    </location>
</feature>
<feature type="compositionally biased region" description="Polar residues" evidence="1">
    <location>
        <begin position="237"/>
        <end position="255"/>
    </location>
</feature>
<feature type="compositionally biased region" description="Polar residues" evidence="1">
    <location>
        <begin position="315"/>
        <end position="354"/>
    </location>
</feature>
<feature type="compositionally biased region" description="Low complexity" evidence="1">
    <location>
        <begin position="355"/>
        <end position="383"/>
    </location>
</feature>
<feature type="compositionally biased region" description="Polar residues" evidence="1">
    <location>
        <begin position="400"/>
        <end position="412"/>
    </location>
</feature>
<feature type="compositionally biased region" description="Polar residues" evidence="1">
    <location>
        <begin position="422"/>
        <end position="439"/>
    </location>
</feature>
<feature type="compositionally biased region" description="Low complexity" evidence="1">
    <location>
        <begin position="471"/>
        <end position="484"/>
    </location>
</feature>
<feature type="compositionally biased region" description="Basic and acidic residues" evidence="1">
    <location>
        <begin position="503"/>
        <end position="512"/>
    </location>
</feature>
<feature type="compositionally biased region" description="Polar residues" evidence="1">
    <location>
        <begin position="572"/>
        <end position="589"/>
    </location>
</feature>
<evidence type="ECO:0000256" key="1">
    <source>
        <dbReference type="SAM" id="MobiDB-lite"/>
    </source>
</evidence>
<evidence type="ECO:0000269" key="2">
    <source>
    </source>
</evidence>
<protein>
    <recommendedName>
        <fullName>Eisosome protein sle1</fullName>
    </recommendedName>
    <alternativeName>
        <fullName>SEG1-like eisosome protein 1</fullName>
    </alternativeName>
</protein>
<comment type="function">
    <text evidence="2">Important for the biogenesis of filamentous eisosomes, large cytoplasmic protein assemblies that localize to specialized domains on the plasma membrane to cluster specific proteins at sites of membrane invaginations.</text>
</comment>
<comment type="subunit">
    <text evidence="2">Component of eisosomes, large cytoplasmic protein assemblies that localize to specialized domains termed MCCs on the plasma membrane.</text>
</comment>
<comment type="subcellular location">
    <subcellularLocation>
        <location evidence="2">Cytoplasm</location>
        <location evidence="2">Cell cortex</location>
    </subcellularLocation>
    <subcellularLocation>
        <location evidence="2">Cell tip</location>
    </subcellularLocation>
    <text evidence="2">Localizes to eisosomes.</text>
</comment>
<organism>
    <name type="scientific">Schizosaccharomyces pombe (strain 972 / ATCC 24843)</name>
    <name type="common">Fission yeast</name>
    <dbReference type="NCBI Taxonomy" id="284812"/>
    <lineage>
        <taxon>Eukaryota</taxon>
        <taxon>Fungi</taxon>
        <taxon>Dikarya</taxon>
        <taxon>Ascomycota</taxon>
        <taxon>Taphrinomycotina</taxon>
        <taxon>Schizosaccharomycetes</taxon>
        <taxon>Schizosaccharomycetales</taxon>
        <taxon>Schizosaccharomycetaceae</taxon>
        <taxon>Schizosaccharomyces</taxon>
    </lineage>
</organism>